<proteinExistence type="evidence at protein level"/>
<feature type="chain" id="PRO_0000072274" description="Protein stand still">
    <location>
        <begin position="1"/>
        <end position="321"/>
    </location>
</feature>
<feature type="region of interest" description="Disordered" evidence="2">
    <location>
        <begin position="146"/>
        <end position="166"/>
    </location>
</feature>
<feature type="region of interest" description="Disordered" evidence="2">
    <location>
        <begin position="227"/>
        <end position="248"/>
    </location>
</feature>
<feature type="coiled-coil region" evidence="1">
    <location>
        <begin position="74"/>
        <end position="103"/>
    </location>
</feature>
<feature type="coiled-coil region" evidence="1">
    <location>
        <begin position="147"/>
        <end position="167"/>
    </location>
</feature>
<feature type="coiled-coil region" evidence="1">
    <location>
        <begin position="272"/>
        <end position="292"/>
    </location>
</feature>
<feature type="compositionally biased region" description="Basic and acidic residues" evidence="2">
    <location>
        <begin position="146"/>
        <end position="162"/>
    </location>
</feature>
<feature type="compositionally biased region" description="Low complexity" evidence="2">
    <location>
        <begin position="235"/>
        <end position="244"/>
    </location>
</feature>
<feature type="mutagenesis site" description="In stil-4; induces female infertility due to germ ovary defects. Loss of chromatin association.">
    <original>P</original>
    <variation>S</variation>
    <location>
        <position position="19"/>
    </location>
</feature>
<feature type="mutagenesis site" description="In stil-2; induces female infertility due to germ ovary defects. Loss of chromatin association.">
    <original>G</original>
    <variation>R</variation>
    <location>
        <position position="58"/>
    </location>
</feature>
<feature type="mutagenesis site" description="In stil-1; induces female infertility due to germ ovary defects.">
    <original>K</original>
    <variation>M</variation>
    <location>
        <position position="79"/>
    </location>
</feature>
<feature type="sequence conflict" description="In Ref. 1; CAA71319/CAA71320." evidence="5" ref="1">
    <original>L</original>
    <variation>M</variation>
    <location>
        <position position="216"/>
    </location>
</feature>
<comment type="function">
    <text evidence="3 4">Essential in the female germline for proper survival, sex determination and differentiation. Participates in the transcriptional activation of Otu. Does not regulate the expression of Ovo.</text>
</comment>
<comment type="subcellular location">
    <subcellularLocation>
        <location evidence="3">Nucleus</location>
    </subcellularLocation>
    <text>Associates with decondensed chromatin, including sites of active transcription.</text>
</comment>
<comment type="tissue specificity">
    <text evidence="3 4">Germ cells specific. Expressed in all germ cells. During the first instar larvae, it is expressed in all germ cells of both sexes. In third instar larvae, it decreases in male germ cells while it remains in female germ cells. In adult ovary, it is expressed in cells of the germarium, including the stem cells. In the early previtellogenic stages, it is highly expressed in the nurse cells. During vitellogenesis, it is not translocated into the maturing egg. In testes, it is only expressed during some steps of male germline differentiation. At the apex testis, it is expressed at low level in stem cells and dividing spermatogonia, while in newly formed 16-cell cysts of primary spermatocytes, it is transiently but strongly expressed before vanishing during spermatocyte growth phase.</text>
</comment>
<comment type="developmental stage">
    <text>In embryos, it is expressed from stage 11 in the germ cell soon after their migration through the midgut epithelium.</text>
</comment>
<protein>
    <recommendedName>
        <fullName>Protein stand still</fullName>
    </recommendedName>
</protein>
<gene>
    <name type="primary">stil</name>
    <name type="ORF">CG8592</name>
</gene>
<name>STIL_DROME</name>
<keyword id="KW-0010">Activator</keyword>
<keyword id="KW-0175">Coiled coil</keyword>
<keyword id="KW-0539">Nucleus</keyword>
<keyword id="KW-1185">Reference proteome</keyword>
<keyword id="KW-0804">Transcription</keyword>
<keyword id="KW-0805">Transcription regulation</keyword>
<accession>P92189</accession>
<accession>Q9V6D8</accession>
<sequence>MSVNLDGSEEKMELKKHVPYILNGELYRIEKQVGDNVTVKCCYCPPDRIYRGSVRSTGNFHMHIKRRHSSLLGKLHEMKVAALEERRDRIMKNRRFAKSRKKAPVAVAATSTAAQSDSGVFVDMQAAVPSGNESHELKIKTVFQRHKQEQEGATRKLEDSTSDKANLPNIPKNLGIVVQNVSNISVETLPGGSTPASVSFLGRPVKPEQGSGPSFLADQPAAIDLSQVPPVQGESKSSGSLASSMEDVSMEYSRSQALSQSLSMAHFLEHPQRDVLQRLERSMAQISQELHCRNRIEHNRMLLEAAKFKFLNPNFQFEPNL</sequence>
<evidence type="ECO:0000255" key="1"/>
<evidence type="ECO:0000256" key="2">
    <source>
        <dbReference type="SAM" id="MobiDB-lite"/>
    </source>
</evidence>
<evidence type="ECO:0000269" key="3">
    <source>
    </source>
</evidence>
<evidence type="ECO:0000269" key="4">
    <source>
    </source>
</evidence>
<evidence type="ECO:0000305" key="5"/>
<reference key="1">
    <citation type="journal article" date="1997" name="Genetics">
        <title>stand still, a Drosophila gene involved in the female germline for proper survival, sex determination and differentiation.</title>
        <authorList>
            <person name="Pennetta G."/>
            <person name="Pauli D."/>
        </authorList>
    </citation>
    <scope>NUCLEOTIDE SEQUENCE [GENOMIC DNA / MRNA]</scope>
    <scope>FUNCTION</scope>
    <scope>TISSUE SPECIFICITY</scope>
    <source>
        <tissue>Ovary</tissue>
    </source>
</reference>
<reference key="2">
    <citation type="journal article" date="2000" name="Science">
        <title>The genome sequence of Drosophila melanogaster.</title>
        <authorList>
            <person name="Adams M.D."/>
            <person name="Celniker S.E."/>
            <person name="Holt R.A."/>
            <person name="Evans C.A."/>
            <person name="Gocayne J.D."/>
            <person name="Amanatides P.G."/>
            <person name="Scherer S.E."/>
            <person name="Li P.W."/>
            <person name="Hoskins R.A."/>
            <person name="Galle R.F."/>
            <person name="George R.A."/>
            <person name="Lewis S.E."/>
            <person name="Richards S."/>
            <person name="Ashburner M."/>
            <person name="Henderson S.N."/>
            <person name="Sutton G.G."/>
            <person name="Wortman J.R."/>
            <person name="Yandell M.D."/>
            <person name="Zhang Q."/>
            <person name="Chen L.X."/>
            <person name="Brandon R.C."/>
            <person name="Rogers Y.-H.C."/>
            <person name="Blazej R.G."/>
            <person name="Champe M."/>
            <person name="Pfeiffer B.D."/>
            <person name="Wan K.H."/>
            <person name="Doyle C."/>
            <person name="Baxter E.G."/>
            <person name="Helt G."/>
            <person name="Nelson C.R."/>
            <person name="Miklos G.L.G."/>
            <person name="Abril J.F."/>
            <person name="Agbayani A."/>
            <person name="An H.-J."/>
            <person name="Andrews-Pfannkoch C."/>
            <person name="Baldwin D."/>
            <person name="Ballew R.M."/>
            <person name="Basu A."/>
            <person name="Baxendale J."/>
            <person name="Bayraktaroglu L."/>
            <person name="Beasley E.M."/>
            <person name="Beeson K.Y."/>
            <person name="Benos P.V."/>
            <person name="Berman B.P."/>
            <person name="Bhandari D."/>
            <person name="Bolshakov S."/>
            <person name="Borkova D."/>
            <person name="Botchan M.R."/>
            <person name="Bouck J."/>
            <person name="Brokstein P."/>
            <person name="Brottier P."/>
            <person name="Burtis K.C."/>
            <person name="Busam D.A."/>
            <person name="Butler H."/>
            <person name="Cadieu E."/>
            <person name="Center A."/>
            <person name="Chandra I."/>
            <person name="Cherry J.M."/>
            <person name="Cawley S."/>
            <person name="Dahlke C."/>
            <person name="Davenport L.B."/>
            <person name="Davies P."/>
            <person name="de Pablos B."/>
            <person name="Delcher A."/>
            <person name="Deng Z."/>
            <person name="Mays A.D."/>
            <person name="Dew I."/>
            <person name="Dietz S.M."/>
            <person name="Dodson K."/>
            <person name="Doup L.E."/>
            <person name="Downes M."/>
            <person name="Dugan-Rocha S."/>
            <person name="Dunkov B.C."/>
            <person name="Dunn P."/>
            <person name="Durbin K.J."/>
            <person name="Evangelista C.C."/>
            <person name="Ferraz C."/>
            <person name="Ferriera S."/>
            <person name="Fleischmann W."/>
            <person name="Fosler C."/>
            <person name="Gabrielian A.E."/>
            <person name="Garg N.S."/>
            <person name="Gelbart W.M."/>
            <person name="Glasser K."/>
            <person name="Glodek A."/>
            <person name="Gong F."/>
            <person name="Gorrell J.H."/>
            <person name="Gu Z."/>
            <person name="Guan P."/>
            <person name="Harris M."/>
            <person name="Harris N.L."/>
            <person name="Harvey D.A."/>
            <person name="Heiman T.J."/>
            <person name="Hernandez J.R."/>
            <person name="Houck J."/>
            <person name="Hostin D."/>
            <person name="Houston K.A."/>
            <person name="Howland T.J."/>
            <person name="Wei M.-H."/>
            <person name="Ibegwam C."/>
            <person name="Jalali M."/>
            <person name="Kalush F."/>
            <person name="Karpen G.H."/>
            <person name="Ke Z."/>
            <person name="Kennison J.A."/>
            <person name="Ketchum K.A."/>
            <person name="Kimmel B.E."/>
            <person name="Kodira C.D."/>
            <person name="Kraft C.L."/>
            <person name="Kravitz S."/>
            <person name="Kulp D."/>
            <person name="Lai Z."/>
            <person name="Lasko P."/>
            <person name="Lei Y."/>
            <person name="Levitsky A.A."/>
            <person name="Li J.H."/>
            <person name="Li Z."/>
            <person name="Liang Y."/>
            <person name="Lin X."/>
            <person name="Liu X."/>
            <person name="Mattei B."/>
            <person name="McIntosh T.C."/>
            <person name="McLeod M.P."/>
            <person name="McPherson D."/>
            <person name="Merkulov G."/>
            <person name="Milshina N.V."/>
            <person name="Mobarry C."/>
            <person name="Morris J."/>
            <person name="Moshrefi A."/>
            <person name="Mount S.M."/>
            <person name="Moy M."/>
            <person name="Murphy B."/>
            <person name="Murphy L."/>
            <person name="Muzny D.M."/>
            <person name="Nelson D.L."/>
            <person name="Nelson D.R."/>
            <person name="Nelson K.A."/>
            <person name="Nixon K."/>
            <person name="Nusskern D.R."/>
            <person name="Pacleb J.M."/>
            <person name="Palazzolo M."/>
            <person name="Pittman G.S."/>
            <person name="Pan S."/>
            <person name="Pollard J."/>
            <person name="Puri V."/>
            <person name="Reese M.G."/>
            <person name="Reinert K."/>
            <person name="Remington K."/>
            <person name="Saunders R.D.C."/>
            <person name="Scheeler F."/>
            <person name="Shen H."/>
            <person name="Shue B.C."/>
            <person name="Siden-Kiamos I."/>
            <person name="Simpson M."/>
            <person name="Skupski M.P."/>
            <person name="Smith T.J."/>
            <person name="Spier E."/>
            <person name="Spradling A.C."/>
            <person name="Stapleton M."/>
            <person name="Strong R."/>
            <person name="Sun E."/>
            <person name="Svirskas R."/>
            <person name="Tector C."/>
            <person name="Turner R."/>
            <person name="Venter E."/>
            <person name="Wang A.H."/>
            <person name="Wang X."/>
            <person name="Wang Z.-Y."/>
            <person name="Wassarman D.A."/>
            <person name="Weinstock G.M."/>
            <person name="Weissenbach J."/>
            <person name="Williams S.M."/>
            <person name="Woodage T."/>
            <person name="Worley K.C."/>
            <person name="Wu D."/>
            <person name="Yang S."/>
            <person name="Yao Q.A."/>
            <person name="Ye J."/>
            <person name="Yeh R.-F."/>
            <person name="Zaveri J.S."/>
            <person name="Zhan M."/>
            <person name="Zhang G."/>
            <person name="Zhao Q."/>
            <person name="Zheng L."/>
            <person name="Zheng X.H."/>
            <person name="Zhong F.N."/>
            <person name="Zhong W."/>
            <person name="Zhou X."/>
            <person name="Zhu S.C."/>
            <person name="Zhu X."/>
            <person name="Smith H.O."/>
            <person name="Gibbs R.A."/>
            <person name="Myers E.W."/>
            <person name="Rubin G.M."/>
            <person name="Venter J.C."/>
        </authorList>
    </citation>
    <scope>NUCLEOTIDE SEQUENCE [LARGE SCALE GENOMIC DNA]</scope>
    <source>
        <strain>Berkeley</strain>
    </source>
</reference>
<reference key="3">
    <citation type="journal article" date="2002" name="Genome Biol.">
        <title>Annotation of the Drosophila melanogaster euchromatic genome: a systematic review.</title>
        <authorList>
            <person name="Misra S."/>
            <person name="Crosby M.A."/>
            <person name="Mungall C.J."/>
            <person name="Matthews B.B."/>
            <person name="Campbell K.S."/>
            <person name="Hradecky P."/>
            <person name="Huang Y."/>
            <person name="Kaminker J.S."/>
            <person name="Millburn G.H."/>
            <person name="Prochnik S.E."/>
            <person name="Smith C.D."/>
            <person name="Tupy J.L."/>
            <person name="Whitfield E.J."/>
            <person name="Bayraktaroglu L."/>
            <person name="Berman B.P."/>
            <person name="Bettencourt B.R."/>
            <person name="Celniker S.E."/>
            <person name="de Grey A.D.N.J."/>
            <person name="Drysdale R.A."/>
            <person name="Harris N.L."/>
            <person name="Richter J."/>
            <person name="Russo S."/>
            <person name="Schroeder A.J."/>
            <person name="Shu S.Q."/>
            <person name="Stapleton M."/>
            <person name="Yamada C."/>
            <person name="Ashburner M."/>
            <person name="Gelbart W.M."/>
            <person name="Rubin G.M."/>
            <person name="Lewis S.E."/>
        </authorList>
    </citation>
    <scope>GENOME REANNOTATION</scope>
    <source>
        <strain>Berkeley</strain>
    </source>
</reference>
<reference key="4">
    <citation type="journal article" date="2002" name="Genome Biol.">
        <title>A Drosophila full-length cDNA resource.</title>
        <authorList>
            <person name="Stapleton M."/>
            <person name="Carlson J.W."/>
            <person name="Brokstein P."/>
            <person name="Yu C."/>
            <person name="Champe M."/>
            <person name="George R.A."/>
            <person name="Guarin H."/>
            <person name="Kronmiller B."/>
            <person name="Pacleb J.M."/>
            <person name="Park S."/>
            <person name="Wan K.H."/>
            <person name="Rubin G.M."/>
            <person name="Celniker S.E."/>
        </authorList>
    </citation>
    <scope>NUCLEOTIDE SEQUENCE [LARGE SCALE MRNA]</scope>
    <source>
        <strain>Berkeley</strain>
        <tissue>Head</tissue>
    </source>
</reference>
<reference key="5">
    <citation type="journal article" date="1999" name="Development">
        <title>The Drosophila gene stand still encodes a germline chromatin-associated protein that controls the transcription of the ovarian tumor gene.</title>
        <authorList>
            <person name="Sahut-Barnola I."/>
            <person name="Pauli D."/>
        </authorList>
    </citation>
    <scope>FUNCTION</scope>
    <scope>SUBCELLULAR LOCATION</scope>
    <scope>TISSUE SPECIFICITY</scope>
    <scope>MUTANTS STIL-1; STIL-2 AND STIL-4</scope>
</reference>
<organism>
    <name type="scientific">Drosophila melanogaster</name>
    <name type="common">Fruit fly</name>
    <dbReference type="NCBI Taxonomy" id="7227"/>
    <lineage>
        <taxon>Eukaryota</taxon>
        <taxon>Metazoa</taxon>
        <taxon>Ecdysozoa</taxon>
        <taxon>Arthropoda</taxon>
        <taxon>Hexapoda</taxon>
        <taxon>Insecta</taxon>
        <taxon>Pterygota</taxon>
        <taxon>Neoptera</taxon>
        <taxon>Endopterygota</taxon>
        <taxon>Diptera</taxon>
        <taxon>Brachycera</taxon>
        <taxon>Muscomorpha</taxon>
        <taxon>Ephydroidea</taxon>
        <taxon>Drosophilidae</taxon>
        <taxon>Drosophila</taxon>
        <taxon>Sophophora</taxon>
    </lineage>
</organism>
<dbReference type="EMBL" id="Y10276">
    <property type="protein sequence ID" value="CAA71319.1"/>
    <property type="molecule type" value="Genomic_DNA"/>
</dbReference>
<dbReference type="EMBL" id="Y10277">
    <property type="protein sequence ID" value="CAA71320.1"/>
    <property type="molecule type" value="mRNA"/>
</dbReference>
<dbReference type="EMBL" id="AE013599">
    <property type="protein sequence ID" value="AAF58490.1"/>
    <property type="molecule type" value="Genomic_DNA"/>
</dbReference>
<dbReference type="EMBL" id="AY075316">
    <property type="protein sequence ID" value="AAL68183.1"/>
    <property type="molecule type" value="mRNA"/>
</dbReference>
<dbReference type="RefSeq" id="NP_476752.1">
    <property type="nucleotide sequence ID" value="NM_057404.4"/>
</dbReference>
<dbReference type="BioGRID" id="62154">
    <property type="interactions" value="3"/>
</dbReference>
<dbReference type="DIP" id="DIP-23414N"/>
<dbReference type="FunCoup" id="P92189">
    <property type="interactions" value="50"/>
</dbReference>
<dbReference type="IntAct" id="P92189">
    <property type="interactions" value="2"/>
</dbReference>
<dbReference type="STRING" id="7227.FBpp0086938"/>
<dbReference type="GlyGen" id="P92189">
    <property type="glycosylation" value="1 site"/>
</dbReference>
<dbReference type="PaxDb" id="7227-FBpp0086938"/>
<dbReference type="DNASU" id="36380"/>
<dbReference type="EnsemblMetazoa" id="FBtr0087825">
    <property type="protein sequence ID" value="FBpp0086938"/>
    <property type="gene ID" value="FBgn0003527"/>
</dbReference>
<dbReference type="GeneID" id="36380"/>
<dbReference type="KEGG" id="dme:Dmel_CG8592"/>
<dbReference type="AGR" id="FB:FBgn0003527"/>
<dbReference type="CTD" id="6491"/>
<dbReference type="FlyBase" id="FBgn0003527">
    <property type="gene designation" value="stil"/>
</dbReference>
<dbReference type="VEuPathDB" id="VectorBase:FBgn0003527"/>
<dbReference type="eggNOG" id="ENOG502T7X3">
    <property type="taxonomic scope" value="Eukaryota"/>
</dbReference>
<dbReference type="HOGENOM" id="CLU_880734_0_0_1"/>
<dbReference type="InParanoid" id="P92189"/>
<dbReference type="OMA" id="CRNRIEH"/>
<dbReference type="OrthoDB" id="7776994at2759"/>
<dbReference type="PhylomeDB" id="P92189"/>
<dbReference type="BioGRID-ORCS" id="36380">
    <property type="hits" value="0 hits in 1 CRISPR screen"/>
</dbReference>
<dbReference type="GenomeRNAi" id="36380"/>
<dbReference type="PRO" id="PR:P92189"/>
<dbReference type="Proteomes" id="UP000000803">
    <property type="component" value="Chromosome 2R"/>
</dbReference>
<dbReference type="Bgee" id="FBgn0003527">
    <property type="expression patterns" value="Expressed in spermatogonium in testis and 27 other cell types or tissues"/>
</dbReference>
<dbReference type="GO" id="GO:0000785">
    <property type="term" value="C:chromatin"/>
    <property type="evidence" value="ECO:0000314"/>
    <property type="project" value="UniProtKB"/>
</dbReference>
<dbReference type="GO" id="GO:0005634">
    <property type="term" value="C:nucleus"/>
    <property type="evidence" value="ECO:0007669"/>
    <property type="project" value="UniProtKB-SubCell"/>
</dbReference>
<dbReference type="GO" id="GO:0003682">
    <property type="term" value="F:chromatin binding"/>
    <property type="evidence" value="ECO:0000314"/>
    <property type="project" value="UniProtKB"/>
</dbReference>
<dbReference type="GO" id="GO:0030237">
    <property type="term" value="P:female sex determination"/>
    <property type="evidence" value="ECO:0000315"/>
    <property type="project" value="UniProtKB"/>
</dbReference>
<dbReference type="GO" id="GO:0046660">
    <property type="term" value="P:female sex differentiation"/>
    <property type="evidence" value="ECO:0000315"/>
    <property type="project" value="UniProtKB"/>
</dbReference>
<dbReference type="GO" id="GO:0018992">
    <property type="term" value="P:germ-line sex determination"/>
    <property type="evidence" value="ECO:0000315"/>
    <property type="project" value="UniProtKB"/>
</dbReference>
<dbReference type="GO" id="GO:0048477">
    <property type="term" value="P:oogenesis"/>
    <property type="evidence" value="ECO:0007001"/>
    <property type="project" value="FlyBase"/>
</dbReference>
<dbReference type="GO" id="GO:0045893">
    <property type="term" value="P:positive regulation of DNA-templated transcription"/>
    <property type="evidence" value="ECO:0000314"/>
    <property type="project" value="UniProtKB"/>
</dbReference>